<dbReference type="EMBL" id="AE016823">
    <property type="protein sequence ID" value="AAS70155.1"/>
    <property type="molecule type" value="Genomic_DNA"/>
</dbReference>
<dbReference type="RefSeq" id="WP_001072660.1">
    <property type="nucleotide sequence ID" value="NC_005823.1"/>
</dbReference>
<dbReference type="SMR" id="Q72S27"/>
<dbReference type="GeneID" id="61144858"/>
<dbReference type="KEGG" id="lic:LIC_11559"/>
<dbReference type="HOGENOM" id="CLU_103507_2_1_12"/>
<dbReference type="Proteomes" id="UP000007037">
    <property type="component" value="Chromosome I"/>
</dbReference>
<dbReference type="GO" id="GO:0022625">
    <property type="term" value="C:cytosolic large ribosomal subunit"/>
    <property type="evidence" value="ECO:0007669"/>
    <property type="project" value="TreeGrafter"/>
</dbReference>
<dbReference type="GO" id="GO:0003735">
    <property type="term" value="F:structural constituent of ribosome"/>
    <property type="evidence" value="ECO:0007669"/>
    <property type="project" value="InterPro"/>
</dbReference>
<dbReference type="GO" id="GO:0006412">
    <property type="term" value="P:translation"/>
    <property type="evidence" value="ECO:0007669"/>
    <property type="project" value="UniProtKB-UniRule"/>
</dbReference>
<dbReference type="FunFam" id="2.30.30.790:FF:000001">
    <property type="entry name" value="50S ribosomal protein L19"/>
    <property type="match status" value="1"/>
</dbReference>
<dbReference type="Gene3D" id="2.30.30.790">
    <property type="match status" value="1"/>
</dbReference>
<dbReference type="HAMAP" id="MF_00402">
    <property type="entry name" value="Ribosomal_bL19"/>
    <property type="match status" value="1"/>
</dbReference>
<dbReference type="InterPro" id="IPR001857">
    <property type="entry name" value="Ribosomal_bL19"/>
</dbReference>
<dbReference type="InterPro" id="IPR018257">
    <property type="entry name" value="Ribosomal_bL19_CS"/>
</dbReference>
<dbReference type="InterPro" id="IPR038657">
    <property type="entry name" value="Ribosomal_bL19_sf"/>
</dbReference>
<dbReference type="InterPro" id="IPR008991">
    <property type="entry name" value="Translation_prot_SH3-like_sf"/>
</dbReference>
<dbReference type="NCBIfam" id="TIGR01024">
    <property type="entry name" value="rplS_bact"/>
    <property type="match status" value="1"/>
</dbReference>
<dbReference type="PANTHER" id="PTHR15680:SF9">
    <property type="entry name" value="LARGE RIBOSOMAL SUBUNIT PROTEIN BL19M"/>
    <property type="match status" value="1"/>
</dbReference>
<dbReference type="PANTHER" id="PTHR15680">
    <property type="entry name" value="RIBOSOMAL PROTEIN L19"/>
    <property type="match status" value="1"/>
</dbReference>
<dbReference type="Pfam" id="PF01245">
    <property type="entry name" value="Ribosomal_L19"/>
    <property type="match status" value="1"/>
</dbReference>
<dbReference type="PIRSF" id="PIRSF002191">
    <property type="entry name" value="Ribosomal_L19"/>
    <property type="match status" value="1"/>
</dbReference>
<dbReference type="PRINTS" id="PR00061">
    <property type="entry name" value="RIBOSOMALL19"/>
</dbReference>
<dbReference type="SUPFAM" id="SSF50104">
    <property type="entry name" value="Translation proteins SH3-like domain"/>
    <property type="match status" value="1"/>
</dbReference>
<dbReference type="PROSITE" id="PS01015">
    <property type="entry name" value="RIBOSOMAL_L19"/>
    <property type="match status" value="1"/>
</dbReference>
<name>RL19_LEPIC</name>
<evidence type="ECO:0000255" key="1">
    <source>
        <dbReference type="HAMAP-Rule" id="MF_00402"/>
    </source>
</evidence>
<evidence type="ECO:0000305" key="2"/>
<keyword id="KW-0687">Ribonucleoprotein</keyword>
<keyword id="KW-0689">Ribosomal protein</keyword>
<sequence length="138" mass="15522">MNQLLREVLTPDAERTQNFTVGDTVKVHYKIVESGKERVQIYEGVVISVANEANGKTFTVRRVSYDVGVERIFPLFSPKIAKIELIRKGKVRRAKLYYLRNLAGKAARIKELKGGKALVSEDRKRQQAAAATKSTTTE</sequence>
<organism>
    <name type="scientific">Leptospira interrogans serogroup Icterohaemorrhagiae serovar copenhageni (strain Fiocruz L1-130)</name>
    <dbReference type="NCBI Taxonomy" id="267671"/>
    <lineage>
        <taxon>Bacteria</taxon>
        <taxon>Pseudomonadati</taxon>
        <taxon>Spirochaetota</taxon>
        <taxon>Spirochaetia</taxon>
        <taxon>Leptospirales</taxon>
        <taxon>Leptospiraceae</taxon>
        <taxon>Leptospira</taxon>
    </lineage>
</organism>
<gene>
    <name evidence="1" type="primary">rplS</name>
    <name type="ordered locus">LIC_11559</name>
</gene>
<accession>Q72S27</accession>
<comment type="function">
    <text evidence="1">This protein is located at the 30S-50S ribosomal subunit interface and may play a role in the structure and function of the aminoacyl-tRNA binding site.</text>
</comment>
<comment type="similarity">
    <text evidence="1">Belongs to the bacterial ribosomal protein bL19 family.</text>
</comment>
<proteinExistence type="inferred from homology"/>
<reference key="1">
    <citation type="journal article" date="2004" name="J. Bacteriol.">
        <title>Comparative genomics of two Leptospira interrogans serovars reveals novel insights into physiology and pathogenesis.</title>
        <authorList>
            <person name="Nascimento A.L.T.O."/>
            <person name="Ko A.I."/>
            <person name="Martins E.A.L."/>
            <person name="Monteiro-Vitorello C.B."/>
            <person name="Ho P.L."/>
            <person name="Haake D.A."/>
            <person name="Verjovski-Almeida S."/>
            <person name="Hartskeerl R.A."/>
            <person name="Marques M.V."/>
            <person name="Oliveira M.C."/>
            <person name="Menck C.F.M."/>
            <person name="Leite L.C.C."/>
            <person name="Carrer H."/>
            <person name="Coutinho L.L."/>
            <person name="Degrave W.M."/>
            <person name="Dellagostin O.A."/>
            <person name="El-Dorry H."/>
            <person name="Ferro E.S."/>
            <person name="Ferro M.I.T."/>
            <person name="Furlan L.R."/>
            <person name="Gamberini M."/>
            <person name="Giglioti E.A."/>
            <person name="Goes-Neto A."/>
            <person name="Goldman G.H."/>
            <person name="Goldman M.H.S."/>
            <person name="Harakava R."/>
            <person name="Jeronimo S.M.B."/>
            <person name="Junqueira-de-Azevedo I.L.M."/>
            <person name="Kimura E.T."/>
            <person name="Kuramae E.E."/>
            <person name="Lemos E.G.M."/>
            <person name="Lemos M.V.F."/>
            <person name="Marino C.L."/>
            <person name="Nunes L.R."/>
            <person name="de Oliveira R.C."/>
            <person name="Pereira G.G."/>
            <person name="Reis M.S."/>
            <person name="Schriefer A."/>
            <person name="Siqueira W.J."/>
            <person name="Sommer P."/>
            <person name="Tsai S.M."/>
            <person name="Simpson A.J.G."/>
            <person name="Ferro J.A."/>
            <person name="Camargo L.E.A."/>
            <person name="Kitajima J.P."/>
            <person name="Setubal J.C."/>
            <person name="Van Sluys M.A."/>
        </authorList>
    </citation>
    <scope>NUCLEOTIDE SEQUENCE [LARGE SCALE GENOMIC DNA]</scope>
    <source>
        <strain>Fiocruz L1-130</strain>
    </source>
</reference>
<feature type="chain" id="PRO_0000163475" description="Large ribosomal subunit protein bL19">
    <location>
        <begin position="1"/>
        <end position="138"/>
    </location>
</feature>
<protein>
    <recommendedName>
        <fullName evidence="1">Large ribosomal subunit protein bL19</fullName>
    </recommendedName>
    <alternativeName>
        <fullName evidence="2">50S ribosomal protein L19</fullName>
    </alternativeName>
</protein>